<dbReference type="EMBL" id="BA000001">
    <property type="status" value="NOT_ANNOTATED_CDS"/>
    <property type="molecule type" value="Genomic_DNA"/>
</dbReference>
<dbReference type="RefSeq" id="WP_010885956.1">
    <property type="nucleotide sequence ID" value="NC_000961.1"/>
</dbReference>
<dbReference type="SMR" id="P60463"/>
<dbReference type="GeneID" id="1442738"/>
<dbReference type="OrthoDB" id="43651at2157"/>
<dbReference type="Proteomes" id="UP000000752">
    <property type="component" value="Chromosome"/>
</dbReference>
<dbReference type="GO" id="GO:0005886">
    <property type="term" value="C:plasma membrane"/>
    <property type="evidence" value="ECO:0007669"/>
    <property type="project" value="UniProtKB-SubCell"/>
</dbReference>
<dbReference type="GO" id="GO:0015031">
    <property type="term" value="P:protein transport"/>
    <property type="evidence" value="ECO:0007669"/>
    <property type="project" value="UniProtKB-UniRule"/>
</dbReference>
<dbReference type="HAMAP" id="MF_00751">
    <property type="entry name" value="SecG"/>
    <property type="match status" value="1"/>
</dbReference>
<dbReference type="InterPro" id="IPR023531">
    <property type="entry name" value="Preprot_translocase_SecG"/>
</dbReference>
<dbReference type="InterPro" id="IPR016482">
    <property type="entry name" value="SecG/Sec61-beta/Sbh"/>
</dbReference>
<dbReference type="NCBIfam" id="NF002318">
    <property type="entry name" value="PRK01253.1"/>
    <property type="match status" value="1"/>
</dbReference>
<dbReference type="Pfam" id="PF03911">
    <property type="entry name" value="Sec61_beta"/>
    <property type="match status" value="1"/>
</dbReference>
<feature type="chain" id="PRO_0000157276" description="Preprotein translocase subunit SecG">
    <location>
        <begin position="1"/>
        <end position="56"/>
    </location>
</feature>
<feature type="topological domain" description="Cytoplasmic" evidence="1">
    <location>
        <begin position="1"/>
        <end position="29"/>
    </location>
</feature>
<feature type="transmembrane region" description="Helical" evidence="1">
    <location>
        <begin position="30"/>
        <end position="49"/>
    </location>
</feature>
<feature type="topological domain" description="Extracellular" evidence="1">
    <location>
        <begin position="50"/>
        <end position="56"/>
    </location>
</feature>
<reference key="1">
    <citation type="journal article" date="1998" name="DNA Res.">
        <title>Complete sequence and gene organization of the genome of a hyper-thermophilic archaebacterium, Pyrococcus horikoshii OT3.</title>
        <authorList>
            <person name="Kawarabayasi Y."/>
            <person name="Sawada M."/>
            <person name="Horikawa H."/>
            <person name="Haikawa Y."/>
            <person name="Hino Y."/>
            <person name="Yamamoto S."/>
            <person name="Sekine M."/>
            <person name="Baba S."/>
            <person name="Kosugi H."/>
            <person name="Hosoyama A."/>
            <person name="Nagai Y."/>
            <person name="Sakai M."/>
            <person name="Ogura K."/>
            <person name="Otsuka R."/>
            <person name="Nakazawa H."/>
            <person name="Takamiya M."/>
            <person name="Ohfuku Y."/>
            <person name="Funahashi T."/>
            <person name="Tanaka T."/>
            <person name="Kudoh Y."/>
            <person name="Yamazaki J."/>
            <person name="Kushida N."/>
            <person name="Oguchi A."/>
            <person name="Aoki K."/>
            <person name="Yoshizawa T."/>
            <person name="Nakamura Y."/>
            <person name="Robb F.T."/>
            <person name="Horikoshi K."/>
            <person name="Masuchi Y."/>
            <person name="Shizuya H."/>
            <person name="Kikuchi H."/>
        </authorList>
    </citation>
    <scope>NUCLEOTIDE SEQUENCE [LARGE SCALE GENOMIC DNA]</scope>
    <source>
        <strain>ATCC 700860 / DSM 12428 / JCM 9974 / NBRC 100139 / OT-3</strain>
    </source>
</reference>
<keyword id="KW-1003">Cell membrane</keyword>
<keyword id="KW-0472">Membrane</keyword>
<keyword id="KW-0653">Protein transport</keyword>
<keyword id="KW-0811">Translocation</keyword>
<keyword id="KW-0812">Transmembrane</keyword>
<keyword id="KW-1133">Transmembrane helix</keyword>
<keyword id="KW-0813">Transport</keyword>
<protein>
    <recommendedName>
        <fullName>Preprotein translocase subunit SecG</fullName>
    </recommendedName>
    <alternativeName>
        <fullName>Protein transport protein Sec61 subunit beta homolog</fullName>
    </alternativeName>
</protein>
<sequence>MAKEKTTLPPTGAGLMRFFDEDTRAIKITPKGAIALVLILIIFEILLHVVGPRIFG</sequence>
<evidence type="ECO:0000250" key="1"/>
<evidence type="ECO:0000305" key="2"/>
<proteinExistence type="inferred from homology"/>
<organism>
    <name type="scientific">Pyrococcus horikoshii (strain ATCC 700860 / DSM 12428 / JCM 9974 / NBRC 100139 / OT-3)</name>
    <dbReference type="NCBI Taxonomy" id="70601"/>
    <lineage>
        <taxon>Archaea</taxon>
        <taxon>Methanobacteriati</taxon>
        <taxon>Methanobacteriota</taxon>
        <taxon>Thermococci</taxon>
        <taxon>Thermococcales</taxon>
        <taxon>Thermococcaceae</taxon>
        <taxon>Pyrococcus</taxon>
    </lineage>
</organism>
<name>SECG_PYRHO</name>
<gene>
    <name type="primary">secG</name>
    <name type="ordered locus">PH1895.1</name>
</gene>
<comment type="function">
    <text evidence="1">Involved in protein export. The function of the beta subunit is unknown, but it may be involved in stabilization of the trimeric complex (By similarity).</text>
</comment>
<comment type="subunit">
    <text evidence="1">Component of the protein translocase complex. Heterotrimer consisting of alpha (SecY), beta (SecG) and gamma (SecE) subunits. Can form oligomers of the heterotrimer (By similarity).</text>
</comment>
<comment type="subcellular location">
    <subcellularLocation>
        <location evidence="1">Cell membrane</location>
        <topology evidence="1">Single-pass membrane protein</topology>
    </subcellularLocation>
</comment>
<comment type="similarity">
    <text evidence="2">Belongs to the SEC61-beta family.</text>
</comment>
<accession>P60463</accession>